<comment type="similarity">
    <text evidence="2">Belongs to the IS150/IS1296 orfA family.</text>
</comment>
<accession>Q57066</accession>
<accession>O05085</accession>
<protein>
    <recommendedName>
        <fullName>Uncharacterized protein HI_1720</fullName>
    </recommendedName>
</protein>
<name>Y1720_HAEIN</name>
<gene>
    <name type="ordered locus">HI_1720</name>
</gene>
<dbReference type="EMBL" id="L42023">
    <property type="protein sequence ID" value="AAC23366.1"/>
    <property type="molecule type" value="Genomic_DNA"/>
</dbReference>
<dbReference type="PIR" id="D64176">
    <property type="entry name" value="D64176"/>
</dbReference>
<dbReference type="RefSeq" id="NP_439861.2">
    <property type="nucleotide sequence ID" value="NC_000907.1"/>
</dbReference>
<dbReference type="STRING" id="71421.HI_1720"/>
<dbReference type="EnsemblBacteria" id="AAC23366">
    <property type="protein sequence ID" value="AAC23366"/>
    <property type="gene ID" value="HI_1720"/>
</dbReference>
<dbReference type="KEGG" id="hin:HI_1720"/>
<dbReference type="PATRIC" id="fig|71421.8.peg.1799"/>
<dbReference type="eggNOG" id="COG2963">
    <property type="taxonomic scope" value="Bacteria"/>
</dbReference>
<dbReference type="HOGENOM" id="CLU_027402_17_0_6"/>
<dbReference type="OrthoDB" id="5690554at2"/>
<dbReference type="PhylomeDB" id="Q57066"/>
<dbReference type="Proteomes" id="UP000000579">
    <property type="component" value="Chromosome"/>
</dbReference>
<dbReference type="Gene3D" id="1.10.10.10">
    <property type="entry name" value="Winged helix-like DNA-binding domain superfamily/Winged helix DNA-binding domain"/>
    <property type="match status" value="1"/>
</dbReference>
<dbReference type="InterPro" id="IPR009057">
    <property type="entry name" value="Homeodomain-like_sf"/>
</dbReference>
<dbReference type="InterPro" id="IPR055247">
    <property type="entry name" value="InsJ-like_HTH"/>
</dbReference>
<dbReference type="InterPro" id="IPR052057">
    <property type="entry name" value="IS150/IS1296_orfA-like"/>
</dbReference>
<dbReference type="InterPro" id="IPR036388">
    <property type="entry name" value="WH-like_DNA-bd_sf"/>
</dbReference>
<dbReference type="PANTHER" id="PTHR33795">
    <property type="entry name" value="INSERTION ELEMENT IS150 PROTEIN INSJ"/>
    <property type="match status" value="1"/>
</dbReference>
<dbReference type="PANTHER" id="PTHR33795:SF1">
    <property type="entry name" value="INSERTION ELEMENT IS150 PROTEIN INSJ"/>
    <property type="match status" value="1"/>
</dbReference>
<dbReference type="Pfam" id="PF13518">
    <property type="entry name" value="HTH_28"/>
    <property type="match status" value="2"/>
</dbReference>
<dbReference type="SUPFAM" id="SSF46689">
    <property type="entry name" value="Homeodomain-like"/>
    <property type="match status" value="2"/>
</dbReference>
<feature type="chain" id="PRO_0000078110" description="Uncharacterized protein HI_1720">
    <location>
        <begin position="1"/>
        <end position="188"/>
    </location>
</feature>
<feature type="region of interest" description="Disordered" evidence="1">
    <location>
        <begin position="133"/>
        <end position="153"/>
    </location>
</feature>
<evidence type="ECO:0000256" key="1">
    <source>
        <dbReference type="SAM" id="MobiDB-lite"/>
    </source>
</evidence>
<evidence type="ECO:0000305" key="2"/>
<reference key="1">
    <citation type="journal article" date="1995" name="Science">
        <title>Whole-genome random sequencing and assembly of Haemophilus influenzae Rd.</title>
        <authorList>
            <person name="Fleischmann R.D."/>
            <person name="Adams M.D."/>
            <person name="White O."/>
            <person name="Clayton R.A."/>
            <person name="Kirkness E.F."/>
            <person name="Kerlavage A.R."/>
            <person name="Bult C.J."/>
            <person name="Tomb J.-F."/>
            <person name="Dougherty B.A."/>
            <person name="Merrick J.M."/>
            <person name="McKenney K."/>
            <person name="Sutton G.G."/>
            <person name="FitzHugh W."/>
            <person name="Fields C.A."/>
            <person name="Gocayne J.D."/>
            <person name="Scott J.D."/>
            <person name="Shirley R."/>
            <person name="Liu L.-I."/>
            <person name="Glodek A."/>
            <person name="Kelley J.M."/>
            <person name="Weidman J.F."/>
            <person name="Phillips C.A."/>
            <person name="Spriggs T."/>
            <person name="Hedblom E."/>
            <person name="Cotton M.D."/>
            <person name="Utterback T.R."/>
            <person name="Hanna M.C."/>
            <person name="Nguyen D.T."/>
            <person name="Saudek D.M."/>
            <person name="Brandon R.C."/>
            <person name="Fine L.D."/>
            <person name="Fritchman J.L."/>
            <person name="Fuhrmann J.L."/>
            <person name="Geoghagen N.S.M."/>
            <person name="Gnehm C.L."/>
            <person name="McDonald L.A."/>
            <person name="Small K.V."/>
            <person name="Fraser C.M."/>
            <person name="Smith H.O."/>
            <person name="Venter J.C."/>
        </authorList>
    </citation>
    <scope>NUCLEOTIDE SEQUENCE [LARGE SCALE GENOMIC DNA]</scope>
    <source>
        <strain>ATCC 51907 / DSM 11121 / KW20 / Rd</strain>
    </source>
</reference>
<keyword id="KW-1185">Reference proteome</keyword>
<organism>
    <name type="scientific">Haemophilus influenzae (strain ATCC 51907 / DSM 11121 / KW20 / Rd)</name>
    <dbReference type="NCBI Taxonomy" id="71421"/>
    <lineage>
        <taxon>Bacteria</taxon>
        <taxon>Pseudomonadati</taxon>
        <taxon>Pseudomonadota</taxon>
        <taxon>Gammaproteobacteria</taxon>
        <taxon>Pasteurellales</taxon>
        <taxon>Pasteurellaceae</taxon>
        <taxon>Haemophilus</taxon>
    </lineage>
</organism>
<sequence length="188" mass="21747">MICTPKVGLNNQLTKVQFFMTKYNFLFKQQVIEFYLQNDKNSSLTRRHFQLAETTLERWINQFNHSGINGLALLGKKRNYSPEFKLNVIQAVKNGKFSAEAACLHFGIANSGVVSQWLQAFEKQGINGLIPKPKGRPTMKLQYPKMPPKPKTREEELELENLRLRAENAILKKLQELNQQKMQKKPLS</sequence>
<proteinExistence type="inferred from homology"/>